<name>RPO1C_THEVO</name>
<protein>
    <recommendedName>
        <fullName evidence="1">DNA-directed RNA polymerase subunit Rpo1C</fullName>
        <ecNumber evidence="1">2.7.7.6</ecNumber>
    </recommendedName>
    <alternativeName>
        <fullName evidence="1">DNA-directed RNA polymerase subunit A''</fullName>
    </alternativeName>
</protein>
<evidence type="ECO:0000255" key="1">
    <source>
        <dbReference type="HAMAP-Rule" id="MF_00411"/>
    </source>
</evidence>
<gene>
    <name evidence="1" type="primary">rpo1C</name>
    <name evidence="1" type="synonym">rpoA2</name>
    <name type="ordered locus">TV1206</name>
    <name type="ORF">TVG1233699</name>
</gene>
<dbReference type="EC" id="2.7.7.6" evidence="1"/>
<dbReference type="EMBL" id="BA000011">
    <property type="protein sequence ID" value="BAB60348.1"/>
    <property type="molecule type" value="Genomic_DNA"/>
</dbReference>
<dbReference type="SMR" id="Q979F5"/>
<dbReference type="STRING" id="273116.gene:9382008"/>
<dbReference type="PaxDb" id="273116-14325444"/>
<dbReference type="KEGG" id="tvo:TVG1233699"/>
<dbReference type="eggNOG" id="arCOG04256">
    <property type="taxonomic scope" value="Archaea"/>
</dbReference>
<dbReference type="HOGENOM" id="CLU_037097_1_0_2"/>
<dbReference type="PhylomeDB" id="Q979F5"/>
<dbReference type="Proteomes" id="UP000001017">
    <property type="component" value="Chromosome"/>
</dbReference>
<dbReference type="GO" id="GO:0005737">
    <property type="term" value="C:cytoplasm"/>
    <property type="evidence" value="ECO:0007669"/>
    <property type="project" value="UniProtKB-SubCell"/>
</dbReference>
<dbReference type="GO" id="GO:0000428">
    <property type="term" value="C:DNA-directed RNA polymerase complex"/>
    <property type="evidence" value="ECO:0007669"/>
    <property type="project" value="UniProtKB-KW"/>
</dbReference>
<dbReference type="GO" id="GO:0003677">
    <property type="term" value="F:DNA binding"/>
    <property type="evidence" value="ECO:0007669"/>
    <property type="project" value="UniProtKB-UniRule"/>
</dbReference>
<dbReference type="GO" id="GO:0003899">
    <property type="term" value="F:DNA-directed RNA polymerase activity"/>
    <property type="evidence" value="ECO:0007669"/>
    <property type="project" value="UniProtKB-UniRule"/>
</dbReference>
<dbReference type="GO" id="GO:0006351">
    <property type="term" value="P:DNA-templated transcription"/>
    <property type="evidence" value="ECO:0007669"/>
    <property type="project" value="UniProtKB-UniRule"/>
</dbReference>
<dbReference type="CDD" id="cd06528">
    <property type="entry name" value="RNAP_A"/>
    <property type="match status" value="1"/>
</dbReference>
<dbReference type="Gene3D" id="1.10.150.390">
    <property type="match status" value="1"/>
</dbReference>
<dbReference type="HAMAP" id="MF_00411">
    <property type="entry name" value="RNApol_arch_Rpo1C"/>
    <property type="match status" value="1"/>
</dbReference>
<dbReference type="InterPro" id="IPR045867">
    <property type="entry name" value="DNA-dir_RpoC_beta_prime"/>
</dbReference>
<dbReference type="InterPro" id="IPR007081">
    <property type="entry name" value="RNA_pol_Rpb1_5"/>
</dbReference>
<dbReference type="InterPro" id="IPR012757">
    <property type="entry name" value="RPO1C"/>
</dbReference>
<dbReference type="NCBIfam" id="TIGR02389">
    <property type="entry name" value="RNA_pol_rpoA2"/>
    <property type="match status" value="1"/>
</dbReference>
<dbReference type="PANTHER" id="PTHR19376">
    <property type="entry name" value="DNA-DIRECTED RNA POLYMERASE"/>
    <property type="match status" value="1"/>
</dbReference>
<dbReference type="PANTHER" id="PTHR19376:SF32">
    <property type="entry name" value="DNA-DIRECTED RNA POLYMERASE III SUBUNIT RPC1"/>
    <property type="match status" value="1"/>
</dbReference>
<dbReference type="Pfam" id="PF04998">
    <property type="entry name" value="RNA_pol_Rpb1_5"/>
    <property type="match status" value="1"/>
</dbReference>
<dbReference type="SUPFAM" id="SSF64484">
    <property type="entry name" value="beta and beta-prime subunits of DNA dependent RNA-polymerase"/>
    <property type="match status" value="1"/>
</dbReference>
<comment type="function">
    <text evidence="1">DNA-dependent RNA polymerase (RNAP) catalyzes the transcription of DNA into RNA using the four ribonucleoside triphosphates as substrates. Forms part of the jaw domain.</text>
</comment>
<comment type="catalytic activity">
    <reaction evidence="1">
        <text>RNA(n) + a ribonucleoside 5'-triphosphate = RNA(n+1) + diphosphate</text>
        <dbReference type="Rhea" id="RHEA:21248"/>
        <dbReference type="Rhea" id="RHEA-COMP:14527"/>
        <dbReference type="Rhea" id="RHEA-COMP:17342"/>
        <dbReference type="ChEBI" id="CHEBI:33019"/>
        <dbReference type="ChEBI" id="CHEBI:61557"/>
        <dbReference type="ChEBI" id="CHEBI:140395"/>
        <dbReference type="EC" id="2.7.7.6"/>
    </reaction>
</comment>
<comment type="subunit">
    <text evidence="1">Part of the RNA polymerase complex.</text>
</comment>
<comment type="subcellular location">
    <subcellularLocation>
        <location evidence="1">Cytoplasm</location>
    </subcellularLocation>
</comment>
<comment type="similarity">
    <text evidence="1">Belongs to the RNA polymerase beta' chain family.</text>
</comment>
<proteinExistence type="inferred from homology"/>
<feature type="chain" id="PRO_0000074030" description="DNA-directed RNA polymerase subunit Rpo1C">
    <location>
        <begin position="1"/>
        <end position="508"/>
    </location>
</feature>
<feature type="region of interest" description="Unknown">
    <location>
        <begin position="1"/>
        <end position="123"/>
    </location>
</feature>
<feature type="region of interest" description="DNA-directed RNA polymerase subunit Rpo1C">
    <location>
        <begin position="124"/>
        <end position="508"/>
    </location>
</feature>
<accession>Q979F5</accession>
<keyword id="KW-0963">Cytoplasm</keyword>
<keyword id="KW-0238">DNA-binding</keyword>
<keyword id="KW-0240">DNA-directed RNA polymerase</keyword>
<keyword id="KW-0548">Nucleotidyltransferase</keyword>
<keyword id="KW-0804">Transcription</keyword>
<keyword id="KW-0808">Transferase</keyword>
<organism>
    <name type="scientific">Thermoplasma volcanium (strain ATCC 51530 / DSM 4299 / JCM 9571 / NBRC 15438 / GSS1)</name>
    <dbReference type="NCBI Taxonomy" id="273116"/>
    <lineage>
        <taxon>Archaea</taxon>
        <taxon>Methanobacteriati</taxon>
        <taxon>Thermoplasmatota</taxon>
        <taxon>Thermoplasmata</taxon>
        <taxon>Thermoplasmatales</taxon>
        <taxon>Thermoplasmataceae</taxon>
        <taxon>Thermoplasma</taxon>
    </lineage>
</organism>
<reference key="1">
    <citation type="journal article" date="2000" name="Proc. Natl. Acad. Sci. U.S.A.">
        <title>Archaeal adaptation to higher temperatures revealed by genomic sequence of Thermoplasma volcanium.</title>
        <authorList>
            <person name="Kawashima T."/>
            <person name="Amano N."/>
            <person name="Koike H."/>
            <person name="Makino S."/>
            <person name="Higuchi S."/>
            <person name="Kawashima-Ohya Y."/>
            <person name="Watanabe K."/>
            <person name="Yamazaki M."/>
            <person name="Kanehori K."/>
            <person name="Kawamoto T."/>
            <person name="Nunoshiba T."/>
            <person name="Yamamoto Y."/>
            <person name="Aramaki H."/>
            <person name="Makino K."/>
            <person name="Suzuki M."/>
        </authorList>
    </citation>
    <scope>NUCLEOTIDE SEQUENCE [LARGE SCALE GENOMIC DNA]</scope>
    <source>
        <strain>ATCC 51530 / DSM 4299 / JCM 9571 / NBRC 15438 / GSS1</strain>
    </source>
</reference>
<sequence length="508" mass="56950">MIIWKDTAKNMSLLSKSVPAKYAVDFEVPKGITEGYVTSDKKRFTYHVSISSVAPYSNESDVIQKKKSGLKSIMEIEKIQKIEPISIMEFRSSGKRIDELLTYAIAERETAEIREKYEYEKKVSSQVLDVIAEAKKLGYNIPESVAEEILRRKEEWGEKKYREILKRIGEEIQDELIDPYEAVGIIAAQSIGEPGTQMTMRTFHFAGVREMNVTLGLPRLIEIVDARRIPSTPSMTIYLKPEFETNDEVVMDVVKRLENTSVSDVADIITDIGELTITVRPDPNKMNDRLINQDDLVNAIYKVKGVTVMEESGQIIVKPQQESFKKLYLLQEQIKALPIKGISGIKRAIARVEGKEHRWVIYTQGSNLKDVLEVDEVDPTRTYTNDIVEIATVLGIEAARNAILNEAQRTLQEQGLNVDVRHLMLVADMMTFSGSVRAVGRTGISGRKSSVLARAAFEITTKHLLRAGIMGEVDKLAGVAENIIVGQPITLGTGAVDIIYKGYPKTKK</sequence>